<feature type="chain" id="PRO_0000357764" description="NADH-quinone oxidoreductase subunit D">
    <location>
        <begin position="1"/>
        <end position="366"/>
    </location>
</feature>
<dbReference type="EC" id="7.1.1.-" evidence="1"/>
<dbReference type="EMBL" id="AE017194">
    <property type="protein sequence ID" value="AAS44322.1"/>
    <property type="molecule type" value="Genomic_DNA"/>
</dbReference>
<dbReference type="SMR" id="Q72XF6"/>
<dbReference type="KEGG" id="bca:BCE_5422"/>
<dbReference type="HOGENOM" id="CLU_015134_1_2_9"/>
<dbReference type="Proteomes" id="UP000002527">
    <property type="component" value="Chromosome"/>
</dbReference>
<dbReference type="GO" id="GO:0005886">
    <property type="term" value="C:plasma membrane"/>
    <property type="evidence" value="ECO:0007669"/>
    <property type="project" value="UniProtKB-SubCell"/>
</dbReference>
<dbReference type="GO" id="GO:0051287">
    <property type="term" value="F:NAD binding"/>
    <property type="evidence" value="ECO:0007669"/>
    <property type="project" value="InterPro"/>
</dbReference>
<dbReference type="GO" id="GO:0050136">
    <property type="term" value="F:NADH:ubiquinone reductase (non-electrogenic) activity"/>
    <property type="evidence" value="ECO:0007669"/>
    <property type="project" value="UniProtKB-UniRule"/>
</dbReference>
<dbReference type="GO" id="GO:0048038">
    <property type="term" value="F:quinone binding"/>
    <property type="evidence" value="ECO:0007669"/>
    <property type="project" value="UniProtKB-KW"/>
</dbReference>
<dbReference type="FunFam" id="1.10.645.10:FF:000006">
    <property type="entry name" value="NADH-quinone oxidoreductase subunit D"/>
    <property type="match status" value="1"/>
</dbReference>
<dbReference type="Gene3D" id="1.10.645.10">
    <property type="entry name" value="Cytochrome-c3 Hydrogenase, chain B"/>
    <property type="match status" value="1"/>
</dbReference>
<dbReference type="HAMAP" id="MF_01358">
    <property type="entry name" value="NDH1_NuoD"/>
    <property type="match status" value="1"/>
</dbReference>
<dbReference type="InterPro" id="IPR001135">
    <property type="entry name" value="NADH_Q_OxRdtase_suD"/>
</dbReference>
<dbReference type="InterPro" id="IPR022885">
    <property type="entry name" value="NDH1_su_D/H"/>
</dbReference>
<dbReference type="InterPro" id="IPR029014">
    <property type="entry name" value="NiFe-Hase_large"/>
</dbReference>
<dbReference type="NCBIfam" id="NF004739">
    <property type="entry name" value="PRK06075.1"/>
    <property type="match status" value="1"/>
</dbReference>
<dbReference type="NCBIfam" id="NF008974">
    <property type="entry name" value="PRK12322.1"/>
    <property type="match status" value="1"/>
</dbReference>
<dbReference type="PANTHER" id="PTHR11993:SF10">
    <property type="entry name" value="NADH DEHYDROGENASE [UBIQUINONE] IRON-SULFUR PROTEIN 2, MITOCHONDRIAL"/>
    <property type="match status" value="1"/>
</dbReference>
<dbReference type="PANTHER" id="PTHR11993">
    <property type="entry name" value="NADH-UBIQUINONE OXIDOREDUCTASE 49 KDA SUBUNIT"/>
    <property type="match status" value="1"/>
</dbReference>
<dbReference type="Pfam" id="PF00346">
    <property type="entry name" value="Complex1_49kDa"/>
    <property type="match status" value="2"/>
</dbReference>
<dbReference type="SUPFAM" id="SSF56762">
    <property type="entry name" value="HydB/Nqo4-like"/>
    <property type="match status" value="1"/>
</dbReference>
<evidence type="ECO:0000255" key="1">
    <source>
        <dbReference type="HAMAP-Rule" id="MF_01358"/>
    </source>
</evidence>
<proteinExistence type="inferred from homology"/>
<keyword id="KW-1003">Cell membrane</keyword>
<keyword id="KW-0472">Membrane</keyword>
<keyword id="KW-0520">NAD</keyword>
<keyword id="KW-0874">Quinone</keyword>
<keyword id="KW-1278">Translocase</keyword>
<keyword id="KW-0813">Transport</keyword>
<protein>
    <recommendedName>
        <fullName evidence="1">NADH-quinone oxidoreductase subunit D</fullName>
        <ecNumber evidence="1">7.1.1.-</ecNumber>
    </recommendedName>
    <alternativeName>
        <fullName evidence="1">NADH dehydrogenase I subunit D</fullName>
    </alternativeName>
    <alternativeName>
        <fullName evidence="1">NDH-1 subunit D</fullName>
    </alternativeName>
</protein>
<name>NUOD_BACC1</name>
<gene>
    <name evidence="1" type="primary">nuoD</name>
    <name type="ordered locus">BCE_5422</name>
</gene>
<reference key="1">
    <citation type="journal article" date="2004" name="Nucleic Acids Res.">
        <title>The genome sequence of Bacillus cereus ATCC 10987 reveals metabolic adaptations and a large plasmid related to Bacillus anthracis pXO1.</title>
        <authorList>
            <person name="Rasko D.A."/>
            <person name="Ravel J."/>
            <person name="Oekstad O.A."/>
            <person name="Helgason E."/>
            <person name="Cer R.Z."/>
            <person name="Jiang L."/>
            <person name="Shores K.A."/>
            <person name="Fouts D.E."/>
            <person name="Tourasse N.J."/>
            <person name="Angiuoli S.V."/>
            <person name="Kolonay J.F."/>
            <person name="Nelson W.C."/>
            <person name="Kolstoe A.-B."/>
            <person name="Fraser C.M."/>
            <person name="Read T.D."/>
        </authorList>
    </citation>
    <scope>NUCLEOTIDE SEQUENCE [LARGE SCALE GENOMIC DNA]</scope>
    <source>
        <strain>ATCC 10987 / NRS 248</strain>
    </source>
</reference>
<organism>
    <name type="scientific">Bacillus cereus (strain ATCC 10987 / NRS 248)</name>
    <dbReference type="NCBI Taxonomy" id="222523"/>
    <lineage>
        <taxon>Bacteria</taxon>
        <taxon>Bacillati</taxon>
        <taxon>Bacillota</taxon>
        <taxon>Bacilli</taxon>
        <taxon>Bacillales</taxon>
        <taxon>Bacillaceae</taxon>
        <taxon>Bacillus</taxon>
        <taxon>Bacillus cereus group</taxon>
    </lineage>
</organism>
<sequence>MIRTEEMLLNVGPQHPSTHGVFRLVIKIDGEIIKEATPVIGYLHRGTEKIAESLQYTQIIPYTDRMDYLSAMTNNYVICHAVETMMGLEIPERAEYLRVLAMELGRIASHLVWWGTNLLDIGAVSPFLYAFREREMIINLLNELCGARLTFNYMRVGGVKWDAPDGWIEKVEEFVPYMREQLAGYHDLVSGNEIFLNRVKGVGIYSEEDAISYSLSGANLRCTGVNWDLRKDEPYSIYDRFDFDIPVGSVGDAWDRYVCRMKEIEESLKIVEQAVQQFPKEGAVLAKVPKIIKAPKGEAFVRIESPRGEIGCYIASDGKKEPYRLKFRRPSFYNLQILPKLLKGENIANLITILGGVDIVLGEVDG</sequence>
<accession>Q72XF6</accession>
<comment type="function">
    <text evidence="1">NDH-1 shuttles electrons from NADH, via FMN and iron-sulfur (Fe-S) centers, to quinones in the respiratory chain. The immediate electron acceptor for the enzyme in this species is believed to be a menaquinone. Couples the redox reaction to proton translocation (for every two electrons transferred, four hydrogen ions are translocated across the cytoplasmic membrane), and thus conserves the redox energy in a proton gradient.</text>
</comment>
<comment type="catalytic activity">
    <reaction evidence="1">
        <text>a quinone + NADH + 5 H(+)(in) = a quinol + NAD(+) + 4 H(+)(out)</text>
        <dbReference type="Rhea" id="RHEA:57888"/>
        <dbReference type="ChEBI" id="CHEBI:15378"/>
        <dbReference type="ChEBI" id="CHEBI:24646"/>
        <dbReference type="ChEBI" id="CHEBI:57540"/>
        <dbReference type="ChEBI" id="CHEBI:57945"/>
        <dbReference type="ChEBI" id="CHEBI:132124"/>
    </reaction>
</comment>
<comment type="subunit">
    <text evidence="1">NDH-1 is composed of 14 different subunits. Subunits NuoB, C, D, E, F, and G constitute the peripheral sector of the complex.</text>
</comment>
<comment type="subcellular location">
    <subcellularLocation>
        <location evidence="1">Cell membrane</location>
        <topology evidence="1">Peripheral membrane protein</topology>
        <orientation evidence="1">Cytoplasmic side</orientation>
    </subcellularLocation>
</comment>
<comment type="similarity">
    <text evidence="1">Belongs to the complex I 49 kDa subunit family.</text>
</comment>